<protein>
    <recommendedName>
        <fullName evidence="1">Glycerol-3-phosphate acyltransferase</fullName>
    </recommendedName>
    <alternativeName>
        <fullName evidence="1">Acyl-PO4 G3P acyltransferase</fullName>
    </alternativeName>
    <alternativeName>
        <fullName evidence="1">Acyl-phosphate--glycerol-3-phosphate acyltransferase</fullName>
    </alternativeName>
    <alternativeName>
        <fullName evidence="1">G3P acyltransferase</fullName>
        <shortName evidence="1">GPAT</shortName>
        <ecNumber evidence="1">2.3.1.275</ecNumber>
    </alternativeName>
    <alternativeName>
        <fullName evidence="1">Lysophosphatidic acid synthase</fullName>
        <shortName evidence="1">LPA synthase</shortName>
    </alternativeName>
</protein>
<dbReference type="EC" id="2.3.1.275" evidence="1"/>
<dbReference type="EMBL" id="CP000030">
    <property type="protein sequence ID" value="AAV87092.1"/>
    <property type="molecule type" value="Genomic_DNA"/>
</dbReference>
<dbReference type="RefSeq" id="WP_011114665.1">
    <property type="nucleotide sequence ID" value="NC_004842.2"/>
</dbReference>
<dbReference type="SMR" id="Q5P9D8"/>
<dbReference type="KEGG" id="ama:AM1298"/>
<dbReference type="HOGENOM" id="CLU_081254_4_0_5"/>
<dbReference type="UniPathway" id="UPA00085"/>
<dbReference type="GO" id="GO:0005886">
    <property type="term" value="C:plasma membrane"/>
    <property type="evidence" value="ECO:0007669"/>
    <property type="project" value="UniProtKB-SubCell"/>
</dbReference>
<dbReference type="GO" id="GO:0043772">
    <property type="term" value="F:acyl-phosphate glycerol-3-phosphate acyltransferase activity"/>
    <property type="evidence" value="ECO:0007669"/>
    <property type="project" value="UniProtKB-UniRule"/>
</dbReference>
<dbReference type="GO" id="GO:0008654">
    <property type="term" value="P:phospholipid biosynthetic process"/>
    <property type="evidence" value="ECO:0007669"/>
    <property type="project" value="UniProtKB-UniRule"/>
</dbReference>
<dbReference type="HAMAP" id="MF_01043">
    <property type="entry name" value="PlsY"/>
    <property type="match status" value="1"/>
</dbReference>
<dbReference type="InterPro" id="IPR003811">
    <property type="entry name" value="G3P_acylTferase_PlsY"/>
</dbReference>
<dbReference type="NCBIfam" id="TIGR00023">
    <property type="entry name" value="glycerol-3-phosphate 1-O-acyltransferase PlsY"/>
    <property type="match status" value="1"/>
</dbReference>
<dbReference type="PANTHER" id="PTHR30309:SF0">
    <property type="entry name" value="GLYCEROL-3-PHOSPHATE ACYLTRANSFERASE-RELATED"/>
    <property type="match status" value="1"/>
</dbReference>
<dbReference type="PANTHER" id="PTHR30309">
    <property type="entry name" value="INNER MEMBRANE PROTEIN YGIH"/>
    <property type="match status" value="1"/>
</dbReference>
<dbReference type="Pfam" id="PF02660">
    <property type="entry name" value="G3P_acyltransf"/>
    <property type="match status" value="1"/>
</dbReference>
<dbReference type="SMART" id="SM01207">
    <property type="entry name" value="G3P_acyltransf"/>
    <property type="match status" value="1"/>
</dbReference>
<accession>Q5P9D8</accession>
<keyword id="KW-0997">Cell inner membrane</keyword>
<keyword id="KW-1003">Cell membrane</keyword>
<keyword id="KW-0444">Lipid biosynthesis</keyword>
<keyword id="KW-0443">Lipid metabolism</keyword>
<keyword id="KW-0472">Membrane</keyword>
<keyword id="KW-0594">Phospholipid biosynthesis</keyword>
<keyword id="KW-1208">Phospholipid metabolism</keyword>
<keyword id="KW-0808">Transferase</keyword>
<keyword id="KW-0812">Transmembrane</keyword>
<keyword id="KW-1133">Transmembrane helix</keyword>
<organism>
    <name type="scientific">Anaplasma marginale (strain St. Maries)</name>
    <dbReference type="NCBI Taxonomy" id="234826"/>
    <lineage>
        <taxon>Bacteria</taxon>
        <taxon>Pseudomonadati</taxon>
        <taxon>Pseudomonadota</taxon>
        <taxon>Alphaproteobacteria</taxon>
        <taxon>Rickettsiales</taxon>
        <taxon>Anaplasmataceae</taxon>
        <taxon>Anaplasma</taxon>
    </lineage>
</organism>
<gene>
    <name evidence="1" type="primary">plsY</name>
    <name type="ordered locus">AM1298</name>
</gene>
<evidence type="ECO:0000255" key="1">
    <source>
        <dbReference type="HAMAP-Rule" id="MF_01043"/>
    </source>
</evidence>
<feature type="chain" id="PRO_0000188311" description="Glycerol-3-phosphate acyltransferase">
    <location>
        <begin position="1"/>
        <end position="198"/>
    </location>
</feature>
<feature type="transmembrane region" description="Helical" evidence="1">
    <location>
        <begin position="10"/>
        <end position="30"/>
    </location>
</feature>
<feature type="transmembrane region" description="Helical" evidence="1">
    <location>
        <begin position="57"/>
        <end position="77"/>
    </location>
</feature>
<feature type="transmembrane region" description="Helical" evidence="1">
    <location>
        <begin position="86"/>
        <end position="106"/>
    </location>
</feature>
<feature type="transmembrane region" description="Helical" evidence="1">
    <location>
        <begin position="118"/>
        <end position="138"/>
    </location>
</feature>
<feature type="transmembrane region" description="Helical" evidence="1">
    <location>
        <begin position="160"/>
        <end position="180"/>
    </location>
</feature>
<proteinExistence type="inferred from homology"/>
<name>PLSY_ANAMM</name>
<reference key="1">
    <citation type="journal article" date="2005" name="Proc. Natl. Acad. Sci. U.S.A.">
        <title>Complete genome sequencing of Anaplasma marginale reveals that the surface is skewed to two superfamilies of outer membrane proteins.</title>
        <authorList>
            <person name="Brayton K.A."/>
            <person name="Kappmeyer L.S."/>
            <person name="Herndon D.R."/>
            <person name="Dark M.J."/>
            <person name="Tibbals D.L."/>
            <person name="Palmer G.H."/>
            <person name="McGuire T.C."/>
            <person name="Knowles D.P. Jr."/>
        </authorList>
    </citation>
    <scope>NUCLEOTIDE SEQUENCE [LARGE SCALE GENOMIC DNA]</scope>
    <source>
        <strain>St. Maries</strain>
    </source>
</reference>
<sequence>MNLIMGYTYLIPILFASYLIGSIPFSWILVKVFYKRDLRSVGSGNIGATNAFRVNRGISFLVLLLDIFKSVLVILILEKMCAHKSIMYLTGFTVVLGHIFPVWFLFKGGKGIAPTIGVVLSINIKIFFLFIITWAVVFMIFRYSSLSSIISIISSCIYCAVTENFNSSIFYIAMSIIVLIKHRDNVIRMINGTEKKLF</sequence>
<comment type="function">
    <text evidence="1">Catalyzes the transfer of an acyl group from acyl-phosphate (acyl-PO(4)) to glycerol-3-phosphate (G3P) to form lysophosphatidic acid (LPA). This enzyme utilizes acyl-phosphate as fatty acyl donor, but not acyl-CoA or acyl-ACP.</text>
</comment>
<comment type="catalytic activity">
    <reaction evidence="1">
        <text>an acyl phosphate + sn-glycerol 3-phosphate = a 1-acyl-sn-glycero-3-phosphate + phosphate</text>
        <dbReference type="Rhea" id="RHEA:34075"/>
        <dbReference type="ChEBI" id="CHEBI:43474"/>
        <dbReference type="ChEBI" id="CHEBI:57597"/>
        <dbReference type="ChEBI" id="CHEBI:57970"/>
        <dbReference type="ChEBI" id="CHEBI:59918"/>
        <dbReference type="EC" id="2.3.1.275"/>
    </reaction>
</comment>
<comment type="pathway">
    <text evidence="1">Lipid metabolism; phospholipid metabolism.</text>
</comment>
<comment type="subunit">
    <text evidence="1">Probably interacts with PlsX.</text>
</comment>
<comment type="subcellular location">
    <subcellularLocation>
        <location evidence="1">Cell inner membrane</location>
        <topology evidence="1">Multi-pass membrane protein</topology>
    </subcellularLocation>
</comment>
<comment type="similarity">
    <text evidence="1">Belongs to the PlsY family.</text>
</comment>